<evidence type="ECO:0000255" key="1">
    <source>
        <dbReference type="HAMAP-Rule" id="MF_00096"/>
    </source>
</evidence>
<sequence length="879" mass="95162">MGMSEIAKAAQKDKAIGGADRDSHTPMMQQYLRIKAQHPDTLLFYRMGDFYELFFDDAEKAARLLDITLTTRGQSAGTPIRMAGVPFHAVEQYLARLVKLGESVVIAEQVGEPGATKGPMERAVSRIVTPGTLTDAALLDDRIDSLLLAATLHRGVLGLAWLNLANGDLRVMECPAEQLQAQFERLRPAEVLVPDGLALPLVESLSPVLRRLADWQFDAGNGERLLTAHFGTRDLAGFDAEGLPVALAAAAALFEYARSTQRQSLEHVTGLRVEREAEYLRLDAATRRNLELTETLRGEASPTLFSLLDSCITSMGSRWLRHALHHPLRDRGVAAQRHGAVGELAGSDAGAPADIGDARMLGAVRAALRGVADVDRITARIALRSARPRDLAALSDSLARLPQLHAALGTPQAPLLCDLLAAIAVPDNALDLLVRAVAAEPAAAVRDGGVIAPGFDAELDELRGIQSNCGEFLLALEVRERERSGIATLKVEFNKVHGFYIEVSHANTGKVPDDYRRRQTLKNAERYITPELKAFEDKALSAQERALAREKLLYEALLEALAAHIPALQRIARALACLDGLGAFAEAAVRHSYVCPQFSAQPGVDIIGGRHPVVERQVEDFISNNCRLAPTRRMLLITGPNMGGKSTFMRQVALIALLAHVGAFVPARSARLGPLDAIFTRIGASDDLASGRSTFMVEMTEASAILHGATEQSLVLMDEIGRGTSTFDGLALAFAIARHLLEKNRCLTLFATHYFELTRLNGDYPECANVHLDAVEHAHRIVFLHAVEDGPASQSYGIEVAALAGIPGSVVREAKRRLRALENREVGNGPQADLFAALPDREPATPSHPALTALAELDPDTLSPREALERLYALKRMTA</sequence>
<protein>
    <recommendedName>
        <fullName evidence="1">DNA mismatch repair protein MutS</fullName>
    </recommendedName>
</protein>
<keyword id="KW-0067">ATP-binding</keyword>
<keyword id="KW-0227">DNA damage</keyword>
<keyword id="KW-0234">DNA repair</keyword>
<keyword id="KW-0238">DNA-binding</keyword>
<keyword id="KW-0547">Nucleotide-binding</keyword>
<keyword id="KW-1185">Reference proteome</keyword>
<gene>
    <name evidence="1" type="primary">mutS</name>
    <name type="ordered locus">AZOSEA36900</name>
    <name type="ORF">ebA6453</name>
</gene>
<comment type="function">
    <text evidence="1">This protein is involved in the repair of mismatches in DNA. It is possible that it carries out the mismatch recognition step. This protein has a weak ATPase activity.</text>
</comment>
<comment type="similarity">
    <text evidence="1">Belongs to the DNA mismatch repair MutS family.</text>
</comment>
<name>MUTS_AROAE</name>
<organism>
    <name type="scientific">Aromatoleum aromaticum (strain DSM 19018 / LMG 30748 / EbN1)</name>
    <name type="common">Azoarcus sp. (strain EbN1)</name>
    <dbReference type="NCBI Taxonomy" id="76114"/>
    <lineage>
        <taxon>Bacteria</taxon>
        <taxon>Pseudomonadati</taxon>
        <taxon>Pseudomonadota</taxon>
        <taxon>Betaproteobacteria</taxon>
        <taxon>Rhodocyclales</taxon>
        <taxon>Rhodocyclaceae</taxon>
        <taxon>Aromatoleum</taxon>
    </lineage>
</organism>
<dbReference type="EMBL" id="CR555306">
    <property type="protein sequence ID" value="CAI09815.1"/>
    <property type="molecule type" value="Genomic_DNA"/>
</dbReference>
<dbReference type="SMR" id="Q5NYP9"/>
<dbReference type="STRING" id="76114.ebA6453"/>
<dbReference type="KEGG" id="eba:ebA6453"/>
<dbReference type="eggNOG" id="COG0249">
    <property type="taxonomic scope" value="Bacteria"/>
</dbReference>
<dbReference type="HOGENOM" id="CLU_002472_4_0_4"/>
<dbReference type="OrthoDB" id="9802448at2"/>
<dbReference type="Proteomes" id="UP000006552">
    <property type="component" value="Chromosome"/>
</dbReference>
<dbReference type="GO" id="GO:0005829">
    <property type="term" value="C:cytosol"/>
    <property type="evidence" value="ECO:0007669"/>
    <property type="project" value="TreeGrafter"/>
</dbReference>
<dbReference type="GO" id="GO:0005524">
    <property type="term" value="F:ATP binding"/>
    <property type="evidence" value="ECO:0007669"/>
    <property type="project" value="UniProtKB-UniRule"/>
</dbReference>
<dbReference type="GO" id="GO:0140664">
    <property type="term" value="F:ATP-dependent DNA damage sensor activity"/>
    <property type="evidence" value="ECO:0007669"/>
    <property type="project" value="InterPro"/>
</dbReference>
<dbReference type="GO" id="GO:0003684">
    <property type="term" value="F:damaged DNA binding"/>
    <property type="evidence" value="ECO:0007669"/>
    <property type="project" value="UniProtKB-UniRule"/>
</dbReference>
<dbReference type="GO" id="GO:0030983">
    <property type="term" value="F:mismatched DNA binding"/>
    <property type="evidence" value="ECO:0007669"/>
    <property type="project" value="InterPro"/>
</dbReference>
<dbReference type="GO" id="GO:0006298">
    <property type="term" value="P:mismatch repair"/>
    <property type="evidence" value="ECO:0007669"/>
    <property type="project" value="UniProtKB-UniRule"/>
</dbReference>
<dbReference type="CDD" id="cd03284">
    <property type="entry name" value="ABC_MutS1"/>
    <property type="match status" value="1"/>
</dbReference>
<dbReference type="FunFam" id="3.40.1170.10:FF:000001">
    <property type="entry name" value="DNA mismatch repair protein MutS"/>
    <property type="match status" value="1"/>
</dbReference>
<dbReference type="Gene3D" id="1.10.1420.10">
    <property type="match status" value="2"/>
</dbReference>
<dbReference type="Gene3D" id="6.10.140.430">
    <property type="match status" value="1"/>
</dbReference>
<dbReference type="Gene3D" id="3.40.1170.10">
    <property type="entry name" value="DNA repair protein MutS, domain I"/>
    <property type="match status" value="1"/>
</dbReference>
<dbReference type="Gene3D" id="3.30.420.110">
    <property type="entry name" value="MutS, connector domain"/>
    <property type="match status" value="1"/>
</dbReference>
<dbReference type="Gene3D" id="3.40.50.300">
    <property type="entry name" value="P-loop containing nucleotide triphosphate hydrolases"/>
    <property type="match status" value="1"/>
</dbReference>
<dbReference type="HAMAP" id="MF_00096">
    <property type="entry name" value="MutS"/>
    <property type="match status" value="1"/>
</dbReference>
<dbReference type="InterPro" id="IPR005748">
    <property type="entry name" value="DNA_mismatch_repair_MutS"/>
</dbReference>
<dbReference type="InterPro" id="IPR007695">
    <property type="entry name" value="DNA_mismatch_repair_MutS-lik_N"/>
</dbReference>
<dbReference type="InterPro" id="IPR017261">
    <property type="entry name" value="DNA_mismatch_repair_MutS/MSH"/>
</dbReference>
<dbReference type="InterPro" id="IPR000432">
    <property type="entry name" value="DNA_mismatch_repair_MutS_C"/>
</dbReference>
<dbReference type="InterPro" id="IPR007861">
    <property type="entry name" value="DNA_mismatch_repair_MutS_clamp"/>
</dbReference>
<dbReference type="InterPro" id="IPR007696">
    <property type="entry name" value="DNA_mismatch_repair_MutS_core"/>
</dbReference>
<dbReference type="InterPro" id="IPR016151">
    <property type="entry name" value="DNA_mismatch_repair_MutS_N"/>
</dbReference>
<dbReference type="InterPro" id="IPR036187">
    <property type="entry name" value="DNA_mismatch_repair_MutS_sf"/>
</dbReference>
<dbReference type="InterPro" id="IPR007860">
    <property type="entry name" value="DNA_mmatch_repair_MutS_con_dom"/>
</dbReference>
<dbReference type="InterPro" id="IPR045076">
    <property type="entry name" value="MutS"/>
</dbReference>
<dbReference type="InterPro" id="IPR036678">
    <property type="entry name" value="MutS_con_dom_sf"/>
</dbReference>
<dbReference type="InterPro" id="IPR027417">
    <property type="entry name" value="P-loop_NTPase"/>
</dbReference>
<dbReference type="NCBIfam" id="TIGR01070">
    <property type="entry name" value="mutS1"/>
    <property type="match status" value="1"/>
</dbReference>
<dbReference type="NCBIfam" id="NF003810">
    <property type="entry name" value="PRK05399.1"/>
    <property type="match status" value="1"/>
</dbReference>
<dbReference type="PANTHER" id="PTHR11361:SF34">
    <property type="entry name" value="DNA MISMATCH REPAIR PROTEIN MSH1, MITOCHONDRIAL"/>
    <property type="match status" value="1"/>
</dbReference>
<dbReference type="PANTHER" id="PTHR11361">
    <property type="entry name" value="DNA MISMATCH REPAIR PROTEIN MUTS FAMILY MEMBER"/>
    <property type="match status" value="1"/>
</dbReference>
<dbReference type="Pfam" id="PF01624">
    <property type="entry name" value="MutS_I"/>
    <property type="match status" value="1"/>
</dbReference>
<dbReference type="Pfam" id="PF05188">
    <property type="entry name" value="MutS_II"/>
    <property type="match status" value="1"/>
</dbReference>
<dbReference type="Pfam" id="PF05192">
    <property type="entry name" value="MutS_III"/>
    <property type="match status" value="1"/>
</dbReference>
<dbReference type="Pfam" id="PF05190">
    <property type="entry name" value="MutS_IV"/>
    <property type="match status" value="1"/>
</dbReference>
<dbReference type="Pfam" id="PF00488">
    <property type="entry name" value="MutS_V"/>
    <property type="match status" value="1"/>
</dbReference>
<dbReference type="PIRSF" id="PIRSF037677">
    <property type="entry name" value="DNA_mis_repair_Msh6"/>
    <property type="match status" value="1"/>
</dbReference>
<dbReference type="SMART" id="SM00534">
    <property type="entry name" value="MUTSac"/>
    <property type="match status" value="1"/>
</dbReference>
<dbReference type="SMART" id="SM00533">
    <property type="entry name" value="MUTSd"/>
    <property type="match status" value="1"/>
</dbReference>
<dbReference type="SUPFAM" id="SSF55271">
    <property type="entry name" value="DNA repair protein MutS, domain I"/>
    <property type="match status" value="1"/>
</dbReference>
<dbReference type="SUPFAM" id="SSF53150">
    <property type="entry name" value="DNA repair protein MutS, domain II"/>
    <property type="match status" value="1"/>
</dbReference>
<dbReference type="SUPFAM" id="SSF48334">
    <property type="entry name" value="DNA repair protein MutS, domain III"/>
    <property type="match status" value="1"/>
</dbReference>
<dbReference type="SUPFAM" id="SSF52540">
    <property type="entry name" value="P-loop containing nucleoside triphosphate hydrolases"/>
    <property type="match status" value="1"/>
</dbReference>
<dbReference type="PROSITE" id="PS00486">
    <property type="entry name" value="DNA_MISMATCH_REPAIR_2"/>
    <property type="match status" value="1"/>
</dbReference>
<feature type="chain" id="PRO_0000224344" description="DNA mismatch repair protein MutS">
    <location>
        <begin position="1"/>
        <end position="879"/>
    </location>
</feature>
<feature type="binding site" evidence="1">
    <location>
        <begin position="639"/>
        <end position="646"/>
    </location>
    <ligand>
        <name>ATP</name>
        <dbReference type="ChEBI" id="CHEBI:30616"/>
    </ligand>
</feature>
<reference key="1">
    <citation type="journal article" date="2005" name="Arch. Microbiol.">
        <title>The genome sequence of an anaerobic aromatic-degrading denitrifying bacterium, strain EbN1.</title>
        <authorList>
            <person name="Rabus R."/>
            <person name="Kube M."/>
            <person name="Heider J."/>
            <person name="Beck A."/>
            <person name="Heitmann K."/>
            <person name="Widdel F."/>
            <person name="Reinhardt R."/>
        </authorList>
    </citation>
    <scope>NUCLEOTIDE SEQUENCE [LARGE SCALE GENOMIC DNA]</scope>
    <source>
        <strain>DSM 19018 / LMG 30748 / EbN1</strain>
    </source>
</reference>
<accession>Q5NYP9</accession>
<proteinExistence type="inferred from homology"/>